<proteinExistence type="evidence at protein level"/>
<gene>
    <name evidence="1" type="primary">TMEM38A</name>
    <name evidence="9" type="synonym">MG33A</name>
</gene>
<comment type="function">
    <text evidence="6 7">Intracellular monovalent cation channel required for maintenance of rapid intracellular calcium release. Acts as a potassium counter-ion channel that functions in synchronization with calcium release from intracellular stores (PubMed:17611541). Opened by a change of voltage within the sarcoplasmic reticulum lumen (PubMed:20643059).</text>
</comment>
<comment type="catalytic activity">
    <reaction evidence="6">
        <text>K(+)(in) = K(+)(out)</text>
        <dbReference type="Rhea" id="RHEA:29463"/>
        <dbReference type="ChEBI" id="CHEBI:29103"/>
    </reaction>
</comment>
<comment type="activity regulation">
    <text evidence="7">Channel activity is activated by a change of voltage within the sarcoplasmic reticulum lumen and blocked by luminal high Ca(2+) levels.</text>
</comment>
<comment type="subunit">
    <text evidence="6">Homotrimer; conformation seems to be controled by binding to diacylglycerol (DAG).</text>
</comment>
<comment type="interaction">
    <interactant intactId="EBI-15646422">
        <id>A5A6S6</id>
    </interactant>
    <interactant intactId="EBI-15646422">
        <id>A5A6S6</id>
        <label>TMEM38A</label>
    </interactant>
    <organismsDiffer>false</organismsDiffer>
    <experiments>3</experiments>
</comment>
<comment type="subcellular location">
    <subcellularLocation>
        <location evidence="6">Sarcoplasmic reticulum membrane</location>
        <topology evidence="6">Multi-pass membrane protein</topology>
    </subcellularLocation>
    <subcellularLocation>
        <location evidence="6">Nucleus membrane</location>
    </subcellularLocation>
</comment>
<comment type="similarity">
    <text evidence="4">Belongs to the TMEM38 family.</text>
</comment>
<sequence>MELLSALSLGELALSFSRVPLFPVFDLSYFIVSILYLKYEPGAVELSRRHPVASWLCAMLHCFGSYILADLLLGEPLIDYFSNNSSILLASAVWYLIFFCPLDLFYKCVCFLPVKLIFVAMKEVVRVRKIAVGIHHAHHHYHHGWFIMIATGWVKGSGVALLSNVEQLLRGVWKPETNEILHMSFPTKASLYGAILFTLQQTRWLPVSKASLIFIFTMFMVSCKVFLTATHSHSSPFDVLEAYVCPVLFGTGSGGDHPQDNHGAWPGGPPSGALATKSKEELSEGSRKKKTKKAD</sequence>
<reference evidence="8 9" key="1">
    <citation type="journal article" date="2007" name="Nature">
        <title>TRIC channels are essential for Ca2+ handling in intracellular stores.</title>
        <authorList>
            <person name="Yazawa M."/>
            <person name="Ferrante C."/>
            <person name="Feng J."/>
            <person name="Mio K."/>
            <person name="Ogura T."/>
            <person name="Zhang M."/>
            <person name="Lin P.-H."/>
            <person name="Pan Z."/>
            <person name="Komazaki S."/>
            <person name="Kato K."/>
            <person name="Nishi M."/>
            <person name="Zhao X."/>
            <person name="Weisleder N."/>
            <person name="Sato C."/>
            <person name="Ma J."/>
            <person name="Takeshima H."/>
        </authorList>
    </citation>
    <scope>NUCLEOTIDE SEQUENCE [MRNA]</scope>
    <scope>FUNCTION</scope>
    <scope>SUBUNIT</scope>
    <scope>SUBCELLULAR LOCATION</scope>
    <scope>CATALYTIC ACTIVITY</scope>
</reference>
<reference key="2">
    <citation type="journal article" date="2010" name="Biophys. J.">
        <title>Charade of the SR K+-channel: two ion-channels, TRIC-A and TRIC-B, masquerade as a single K+-channel.</title>
        <authorList>
            <person name="Pitt S.J."/>
            <person name="Park K.H."/>
            <person name="Nishi M."/>
            <person name="Urashima T."/>
            <person name="Aoki S."/>
            <person name="Yamazaki D."/>
            <person name="Ma J."/>
            <person name="Takeshima H."/>
            <person name="Sitsapesan R."/>
        </authorList>
    </citation>
    <scope>FUNCTION</scope>
    <scope>ACTIVITY REGULATION</scope>
</reference>
<name>TM38A_RABIT</name>
<protein>
    <recommendedName>
        <fullName>Trimeric intracellular cation channel type A</fullName>
        <shortName>TRIC-A</shortName>
        <shortName>TRICA</shortName>
    </recommendedName>
    <alternativeName>
        <fullName>Mitsugumin-33A</fullName>
    </alternativeName>
    <alternativeName>
        <fullName>Transmembrane protein 38A</fullName>
    </alternativeName>
</protein>
<feature type="chain" id="PRO_0000309465" description="Trimeric intracellular cation channel type A">
    <location>
        <begin position="1"/>
        <end position="295"/>
    </location>
</feature>
<feature type="topological domain" description="Lumenal" evidence="8">
    <location>
        <begin position="1"/>
        <end position="18"/>
    </location>
</feature>
<feature type="transmembrane region" description="Helical;Name=1" evidence="4">
    <location>
        <begin position="19"/>
        <end position="39"/>
    </location>
</feature>
<feature type="topological domain" description="Cytoplasmic" evidence="8">
    <location>
        <begin position="40"/>
        <end position="51"/>
    </location>
</feature>
<feature type="transmembrane region" description="Helical;Name=2" evidence="4">
    <location>
        <begin position="52"/>
        <end position="72"/>
    </location>
</feature>
<feature type="topological domain" description="Lumenal" evidence="8">
    <location>
        <begin position="73"/>
        <end position="85"/>
    </location>
</feature>
<feature type="transmembrane region" description="Helical;Name=3" evidence="4">
    <location>
        <begin position="86"/>
        <end position="106"/>
    </location>
</feature>
<feature type="topological domain" description="Cytoplasmic" evidence="8">
    <location>
        <begin position="107"/>
        <end position="144"/>
    </location>
</feature>
<feature type="transmembrane region" description="Helical;Name=4" evidence="4">
    <location>
        <begin position="145"/>
        <end position="165"/>
    </location>
</feature>
<feature type="topological domain" description="Lumenal" evidence="8">
    <location>
        <begin position="166"/>
        <end position="178"/>
    </location>
</feature>
<feature type="transmembrane region" description="Helical;Name=5" evidence="4">
    <location>
        <begin position="179"/>
        <end position="199"/>
    </location>
</feature>
<feature type="topological domain" description="Cytoplasmic" evidence="8">
    <location>
        <begin position="200"/>
        <end position="209"/>
    </location>
</feature>
<feature type="transmembrane region" description="Helical;Name=6" evidence="4">
    <location>
        <begin position="210"/>
        <end position="230"/>
    </location>
</feature>
<feature type="topological domain" description="Lumenal" evidence="8">
    <location>
        <begin position="231"/>
        <end position="234"/>
    </location>
</feature>
<feature type="transmembrane region" description="Helical;Name=7" evidence="4">
    <location>
        <begin position="235"/>
        <end position="255"/>
    </location>
</feature>
<feature type="topological domain" description="Cytoplasmic" evidence="8">
    <location>
        <begin position="256"/>
        <end position="295"/>
    </location>
</feature>
<feature type="region of interest" description="Disordered" evidence="5">
    <location>
        <begin position="256"/>
        <end position="295"/>
    </location>
</feature>
<feature type="compositionally biased region" description="Basic and acidic residues" evidence="5">
    <location>
        <begin position="277"/>
        <end position="286"/>
    </location>
</feature>
<feature type="binding site" evidence="2">
    <location>
        <position position="74"/>
    </location>
    <ligand>
        <name>Ca(2+)</name>
        <dbReference type="ChEBI" id="CHEBI:29108"/>
    </ligand>
</feature>
<feature type="binding site" evidence="3">
    <location>
        <position position="122"/>
    </location>
    <ligand>
        <name>a 1,2-diacyl-sn-glycero-3-phospho-(1D-myo-inositol-4,5-bisphosphate)</name>
        <dbReference type="ChEBI" id="CHEBI:58456"/>
    </ligand>
</feature>
<feature type="binding site" evidence="3">
    <location>
        <position position="126"/>
    </location>
    <ligand>
        <name>a 1,2-diacyl-sn-glycero-3-phospho-(1D-myo-inositol-4,5-bisphosphate)</name>
        <dbReference type="ChEBI" id="CHEBI:58456"/>
    </ligand>
</feature>
<evidence type="ECO:0000250" key="1">
    <source>
        <dbReference type="UniProtKB" id="Q3TMP8"/>
    </source>
</evidence>
<evidence type="ECO:0000250" key="2">
    <source>
        <dbReference type="UniProtKB" id="Q5ZK43"/>
    </source>
</evidence>
<evidence type="ECO:0000250" key="3">
    <source>
        <dbReference type="UniProtKB" id="Q9NA73"/>
    </source>
</evidence>
<evidence type="ECO:0000255" key="4"/>
<evidence type="ECO:0000256" key="5">
    <source>
        <dbReference type="SAM" id="MobiDB-lite"/>
    </source>
</evidence>
<evidence type="ECO:0000269" key="6">
    <source>
    </source>
</evidence>
<evidence type="ECO:0000269" key="7">
    <source>
    </source>
</evidence>
<evidence type="ECO:0000305" key="8"/>
<evidence type="ECO:0000312" key="9">
    <source>
        <dbReference type="EMBL" id="BAF62543.1"/>
    </source>
</evidence>
<keyword id="KW-0106">Calcium</keyword>
<keyword id="KW-0407">Ion channel</keyword>
<keyword id="KW-0406">Ion transport</keyword>
<keyword id="KW-0472">Membrane</keyword>
<keyword id="KW-0479">Metal-binding</keyword>
<keyword id="KW-0539">Nucleus</keyword>
<keyword id="KW-0630">Potassium</keyword>
<keyword id="KW-0631">Potassium channel</keyword>
<keyword id="KW-0633">Potassium transport</keyword>
<keyword id="KW-1185">Reference proteome</keyword>
<keyword id="KW-0703">Sarcoplasmic reticulum</keyword>
<keyword id="KW-0812">Transmembrane</keyword>
<keyword id="KW-1133">Transmembrane helix</keyword>
<keyword id="KW-0813">Transport</keyword>
<organism>
    <name type="scientific">Oryctolagus cuniculus</name>
    <name type="common">Rabbit</name>
    <dbReference type="NCBI Taxonomy" id="9986"/>
    <lineage>
        <taxon>Eukaryota</taxon>
        <taxon>Metazoa</taxon>
        <taxon>Chordata</taxon>
        <taxon>Craniata</taxon>
        <taxon>Vertebrata</taxon>
        <taxon>Euteleostomi</taxon>
        <taxon>Mammalia</taxon>
        <taxon>Eutheria</taxon>
        <taxon>Euarchontoglires</taxon>
        <taxon>Glires</taxon>
        <taxon>Lagomorpha</taxon>
        <taxon>Leporidae</taxon>
        <taxon>Oryctolagus</taxon>
    </lineage>
</organism>
<dbReference type="EMBL" id="AB261160">
    <property type="protein sequence ID" value="BAF62543.1"/>
    <property type="molecule type" value="mRNA"/>
</dbReference>
<dbReference type="RefSeq" id="NP_001093439.1">
    <property type="nucleotide sequence ID" value="NM_001099969.1"/>
</dbReference>
<dbReference type="RefSeq" id="XP_051691648.1">
    <property type="nucleotide sequence ID" value="XM_051835688.2"/>
</dbReference>
<dbReference type="RefSeq" id="XP_069914512.1">
    <property type="nucleotide sequence ID" value="XM_070058411.1"/>
</dbReference>
<dbReference type="SMR" id="A5A6S6"/>
<dbReference type="DIP" id="DIP-60261N"/>
<dbReference type="FunCoup" id="A5A6S6">
    <property type="interactions" value="314"/>
</dbReference>
<dbReference type="STRING" id="9986.ENSOCUP00000033456"/>
<dbReference type="PaxDb" id="9986-ENSOCUP00000010672"/>
<dbReference type="GeneID" id="100101583"/>
<dbReference type="KEGG" id="ocu:100101583"/>
<dbReference type="CTD" id="79041"/>
<dbReference type="eggNOG" id="KOG3944">
    <property type="taxonomic scope" value="Eukaryota"/>
</dbReference>
<dbReference type="InParanoid" id="A5A6S6"/>
<dbReference type="OrthoDB" id="195817at2759"/>
<dbReference type="Proteomes" id="UP000001811">
    <property type="component" value="Unplaced"/>
</dbReference>
<dbReference type="GO" id="GO:0031965">
    <property type="term" value="C:nuclear membrane"/>
    <property type="evidence" value="ECO:0000314"/>
    <property type="project" value="UniProtKB"/>
</dbReference>
<dbReference type="GO" id="GO:0033017">
    <property type="term" value="C:sarcoplasmic reticulum membrane"/>
    <property type="evidence" value="ECO:0000314"/>
    <property type="project" value="UniProtKB"/>
</dbReference>
<dbReference type="GO" id="GO:0042802">
    <property type="term" value="F:identical protein binding"/>
    <property type="evidence" value="ECO:0000353"/>
    <property type="project" value="IntAct"/>
</dbReference>
<dbReference type="GO" id="GO:0046872">
    <property type="term" value="F:metal ion binding"/>
    <property type="evidence" value="ECO:0007669"/>
    <property type="project" value="UniProtKB-KW"/>
</dbReference>
<dbReference type="GO" id="GO:0005267">
    <property type="term" value="F:potassium channel activity"/>
    <property type="evidence" value="ECO:0000314"/>
    <property type="project" value="UniProtKB"/>
</dbReference>
<dbReference type="GO" id="GO:0051279">
    <property type="term" value="P:regulation of release of sequestered calcium ion into cytosol"/>
    <property type="evidence" value="ECO:0000314"/>
    <property type="project" value="UniProtKB"/>
</dbReference>
<dbReference type="InterPro" id="IPR007866">
    <property type="entry name" value="TRIC_channel"/>
</dbReference>
<dbReference type="PANTHER" id="PTHR12454">
    <property type="entry name" value="TRIMERIC INTRACELLULAR CATION CHANNEL"/>
    <property type="match status" value="1"/>
</dbReference>
<dbReference type="PANTHER" id="PTHR12454:SF3">
    <property type="entry name" value="TRIMERIC INTRACELLULAR CATION CHANNEL TYPE A"/>
    <property type="match status" value="1"/>
</dbReference>
<dbReference type="Pfam" id="PF05197">
    <property type="entry name" value="TRIC"/>
    <property type="match status" value="1"/>
</dbReference>
<accession>A5A6S6</accession>